<feature type="chain" id="PRO_0000148482" description="Dihydroorotate dehydrogenase (quinone)">
    <location>
        <begin position="1"/>
        <end position="346"/>
    </location>
</feature>
<feature type="active site" description="Nucleophile" evidence="1">
    <location>
        <position position="178"/>
    </location>
</feature>
<feature type="binding site" evidence="1">
    <location>
        <begin position="62"/>
        <end position="66"/>
    </location>
    <ligand>
        <name>FMN</name>
        <dbReference type="ChEBI" id="CHEBI:58210"/>
    </ligand>
</feature>
<feature type="binding site" evidence="1">
    <location>
        <position position="66"/>
    </location>
    <ligand>
        <name>substrate</name>
    </ligand>
</feature>
<feature type="binding site" evidence="1">
    <location>
        <position position="86"/>
    </location>
    <ligand>
        <name>FMN</name>
        <dbReference type="ChEBI" id="CHEBI:58210"/>
    </ligand>
</feature>
<feature type="binding site" evidence="1">
    <location>
        <begin position="111"/>
        <end position="115"/>
    </location>
    <ligand>
        <name>substrate</name>
    </ligand>
</feature>
<feature type="binding site" evidence="1">
    <location>
        <position position="142"/>
    </location>
    <ligand>
        <name>FMN</name>
        <dbReference type="ChEBI" id="CHEBI:58210"/>
    </ligand>
</feature>
<feature type="binding site" evidence="1">
    <location>
        <position position="175"/>
    </location>
    <ligand>
        <name>FMN</name>
        <dbReference type="ChEBI" id="CHEBI:58210"/>
    </ligand>
</feature>
<feature type="binding site" evidence="1">
    <location>
        <position position="175"/>
    </location>
    <ligand>
        <name>substrate</name>
    </ligand>
</feature>
<feature type="binding site" evidence="1">
    <location>
        <position position="180"/>
    </location>
    <ligand>
        <name>substrate</name>
    </ligand>
</feature>
<feature type="binding site" evidence="1">
    <location>
        <position position="211"/>
    </location>
    <ligand>
        <name>FMN</name>
        <dbReference type="ChEBI" id="CHEBI:58210"/>
    </ligand>
</feature>
<feature type="binding site" evidence="1">
    <location>
        <position position="239"/>
    </location>
    <ligand>
        <name>FMN</name>
        <dbReference type="ChEBI" id="CHEBI:58210"/>
    </ligand>
</feature>
<feature type="binding site" evidence="1">
    <location>
        <begin position="240"/>
        <end position="241"/>
    </location>
    <ligand>
        <name>substrate</name>
    </ligand>
</feature>
<feature type="binding site" evidence="1">
    <location>
        <position position="261"/>
    </location>
    <ligand>
        <name>FMN</name>
        <dbReference type="ChEBI" id="CHEBI:58210"/>
    </ligand>
</feature>
<feature type="binding site" evidence="1">
    <location>
        <position position="289"/>
    </location>
    <ligand>
        <name>FMN</name>
        <dbReference type="ChEBI" id="CHEBI:58210"/>
    </ligand>
</feature>
<feature type="binding site" evidence="1">
    <location>
        <begin position="310"/>
        <end position="311"/>
    </location>
    <ligand>
        <name>FMN</name>
        <dbReference type="ChEBI" id="CHEBI:58210"/>
    </ligand>
</feature>
<protein>
    <recommendedName>
        <fullName evidence="1">Dihydroorotate dehydrogenase (quinone)</fullName>
        <ecNumber evidence="1">1.3.5.2</ecNumber>
    </recommendedName>
    <alternativeName>
        <fullName evidence="1">DHOdehase</fullName>
        <shortName evidence="1">DHOD</shortName>
        <shortName evidence="1">DHODase</shortName>
    </alternativeName>
    <alternativeName>
        <fullName evidence="1">Dihydroorotate oxidase</fullName>
    </alternativeName>
</protein>
<organism>
    <name type="scientific">Thermus thermophilus (strain ATCC BAA-163 / DSM 7039 / HB27)</name>
    <dbReference type="NCBI Taxonomy" id="262724"/>
    <lineage>
        <taxon>Bacteria</taxon>
        <taxon>Thermotogati</taxon>
        <taxon>Deinococcota</taxon>
        <taxon>Deinococci</taxon>
        <taxon>Thermales</taxon>
        <taxon>Thermaceae</taxon>
        <taxon>Thermus</taxon>
    </lineage>
</organism>
<accession>Q72KU3</accession>
<proteinExistence type="inferred from homology"/>
<sequence length="346" mass="37862">MHRFLFALDPEAAHGLALGLLAFWSERGPLLEVPARLLRVEDPRLRVEAFGVSFPNPLGLAAGMDKDARALGAWWALGFGFAEVGTLTPRPQVGNPKPRLFRLVEDRALINRMGFNNRGAEEAARCLKRFRQRGLPLPLGVNLGKNRDTPLERAAEDYLKALRFLEPFGDYFVLNVSSPNTPGLRALQEGPFLDELLARLRPATPKPLLLKVAPDLSPKALDEVLALTKKHRLQGLVAVNTTLAREGLKSPLAREAGGLSGRPLKRRALEVLRHLAEGAEGLALVSVGGVETPLDLWERLKAGASLVQVYTGFVYGGPLFPRRLLLGLLRLMEAEGVSSLGELRRA</sequence>
<name>PYRD_THET2</name>
<reference key="1">
    <citation type="journal article" date="2004" name="Nat. Biotechnol.">
        <title>The genome sequence of the extreme thermophile Thermus thermophilus.</title>
        <authorList>
            <person name="Henne A."/>
            <person name="Brueggemann H."/>
            <person name="Raasch C."/>
            <person name="Wiezer A."/>
            <person name="Hartsch T."/>
            <person name="Liesegang H."/>
            <person name="Johann A."/>
            <person name="Lienard T."/>
            <person name="Gohl O."/>
            <person name="Martinez-Arias R."/>
            <person name="Jacobi C."/>
            <person name="Starkuviene V."/>
            <person name="Schlenczeck S."/>
            <person name="Dencker S."/>
            <person name="Huber R."/>
            <person name="Klenk H.-P."/>
            <person name="Kramer W."/>
            <person name="Merkl R."/>
            <person name="Gottschalk G."/>
            <person name="Fritz H.-J."/>
        </authorList>
    </citation>
    <scope>NUCLEOTIDE SEQUENCE [LARGE SCALE GENOMIC DNA]</scope>
    <source>
        <strain>ATCC BAA-163 / DSM 7039 / HB27</strain>
    </source>
</reference>
<keyword id="KW-1003">Cell membrane</keyword>
<keyword id="KW-0285">Flavoprotein</keyword>
<keyword id="KW-0288">FMN</keyword>
<keyword id="KW-0472">Membrane</keyword>
<keyword id="KW-0560">Oxidoreductase</keyword>
<keyword id="KW-0665">Pyrimidine biosynthesis</keyword>
<comment type="function">
    <text evidence="1">Catalyzes the conversion of dihydroorotate to orotate with quinone as electron acceptor.</text>
</comment>
<comment type="catalytic activity">
    <reaction evidence="1">
        <text>(S)-dihydroorotate + a quinone = orotate + a quinol</text>
        <dbReference type="Rhea" id="RHEA:30187"/>
        <dbReference type="ChEBI" id="CHEBI:24646"/>
        <dbReference type="ChEBI" id="CHEBI:30839"/>
        <dbReference type="ChEBI" id="CHEBI:30864"/>
        <dbReference type="ChEBI" id="CHEBI:132124"/>
        <dbReference type="EC" id="1.3.5.2"/>
    </reaction>
</comment>
<comment type="cofactor">
    <cofactor evidence="1">
        <name>FMN</name>
        <dbReference type="ChEBI" id="CHEBI:58210"/>
    </cofactor>
    <text evidence="1">Binds 1 FMN per subunit.</text>
</comment>
<comment type="pathway">
    <text evidence="1">Pyrimidine metabolism; UMP biosynthesis via de novo pathway; orotate from (S)-dihydroorotate (quinone route): step 1/1.</text>
</comment>
<comment type="subunit">
    <text evidence="1">Monomer.</text>
</comment>
<comment type="subcellular location">
    <subcellularLocation>
        <location evidence="1">Cell membrane</location>
        <topology evidence="1">Peripheral membrane protein</topology>
    </subcellularLocation>
</comment>
<comment type="similarity">
    <text evidence="1">Belongs to the dihydroorotate dehydrogenase family. Type 2 subfamily.</text>
</comment>
<gene>
    <name evidence="1" type="primary">pyrD</name>
    <name type="ordered locus">TT_C0424</name>
</gene>
<dbReference type="EC" id="1.3.5.2" evidence="1"/>
<dbReference type="EMBL" id="AE017221">
    <property type="protein sequence ID" value="AAS80772.1"/>
    <property type="molecule type" value="Genomic_DNA"/>
</dbReference>
<dbReference type="RefSeq" id="WP_011172871.1">
    <property type="nucleotide sequence ID" value="NC_005835.1"/>
</dbReference>
<dbReference type="SMR" id="Q72KU3"/>
<dbReference type="KEGG" id="tth:TT_C0424"/>
<dbReference type="eggNOG" id="COG0167">
    <property type="taxonomic scope" value="Bacteria"/>
</dbReference>
<dbReference type="HOGENOM" id="CLU_013640_2_0_0"/>
<dbReference type="OrthoDB" id="9802377at2"/>
<dbReference type="UniPathway" id="UPA00070">
    <property type="reaction ID" value="UER00946"/>
</dbReference>
<dbReference type="Proteomes" id="UP000000592">
    <property type="component" value="Chromosome"/>
</dbReference>
<dbReference type="GO" id="GO:0005737">
    <property type="term" value="C:cytoplasm"/>
    <property type="evidence" value="ECO:0007669"/>
    <property type="project" value="InterPro"/>
</dbReference>
<dbReference type="GO" id="GO:0005886">
    <property type="term" value="C:plasma membrane"/>
    <property type="evidence" value="ECO:0007669"/>
    <property type="project" value="UniProtKB-SubCell"/>
</dbReference>
<dbReference type="GO" id="GO:0106430">
    <property type="term" value="F:dihydroorotate dehydrogenase (quinone) activity"/>
    <property type="evidence" value="ECO:0007669"/>
    <property type="project" value="UniProtKB-EC"/>
</dbReference>
<dbReference type="GO" id="GO:0006207">
    <property type="term" value="P:'de novo' pyrimidine nucleobase biosynthetic process"/>
    <property type="evidence" value="ECO:0007669"/>
    <property type="project" value="InterPro"/>
</dbReference>
<dbReference type="GO" id="GO:0044205">
    <property type="term" value="P:'de novo' UMP biosynthetic process"/>
    <property type="evidence" value="ECO:0007669"/>
    <property type="project" value="UniProtKB-UniRule"/>
</dbReference>
<dbReference type="CDD" id="cd04738">
    <property type="entry name" value="DHOD_2_like"/>
    <property type="match status" value="1"/>
</dbReference>
<dbReference type="Gene3D" id="3.20.20.70">
    <property type="entry name" value="Aldolase class I"/>
    <property type="match status" value="1"/>
</dbReference>
<dbReference type="HAMAP" id="MF_00225">
    <property type="entry name" value="DHO_dh_type2"/>
    <property type="match status" value="1"/>
</dbReference>
<dbReference type="InterPro" id="IPR013785">
    <property type="entry name" value="Aldolase_TIM"/>
</dbReference>
<dbReference type="InterPro" id="IPR050074">
    <property type="entry name" value="DHO_dehydrogenase"/>
</dbReference>
<dbReference type="InterPro" id="IPR012135">
    <property type="entry name" value="Dihydroorotate_DH_1_2"/>
</dbReference>
<dbReference type="InterPro" id="IPR005719">
    <property type="entry name" value="Dihydroorotate_DH_2"/>
</dbReference>
<dbReference type="InterPro" id="IPR005720">
    <property type="entry name" value="Dihydroorotate_DH_cat"/>
</dbReference>
<dbReference type="InterPro" id="IPR001295">
    <property type="entry name" value="Dihydroorotate_DH_CS"/>
</dbReference>
<dbReference type="NCBIfam" id="NF003652">
    <property type="entry name" value="PRK05286.2-5"/>
    <property type="match status" value="1"/>
</dbReference>
<dbReference type="NCBIfam" id="TIGR01036">
    <property type="entry name" value="pyrD_sub2"/>
    <property type="match status" value="1"/>
</dbReference>
<dbReference type="PANTHER" id="PTHR48109:SF4">
    <property type="entry name" value="DIHYDROOROTATE DEHYDROGENASE (QUINONE), MITOCHONDRIAL"/>
    <property type="match status" value="1"/>
</dbReference>
<dbReference type="PANTHER" id="PTHR48109">
    <property type="entry name" value="DIHYDROOROTATE DEHYDROGENASE (QUINONE), MITOCHONDRIAL-RELATED"/>
    <property type="match status" value="1"/>
</dbReference>
<dbReference type="Pfam" id="PF01180">
    <property type="entry name" value="DHO_dh"/>
    <property type="match status" value="1"/>
</dbReference>
<dbReference type="PIRSF" id="PIRSF000164">
    <property type="entry name" value="DHO_oxidase"/>
    <property type="match status" value="1"/>
</dbReference>
<dbReference type="SUPFAM" id="SSF51395">
    <property type="entry name" value="FMN-linked oxidoreductases"/>
    <property type="match status" value="1"/>
</dbReference>
<dbReference type="PROSITE" id="PS00911">
    <property type="entry name" value="DHODEHASE_1"/>
    <property type="match status" value="1"/>
</dbReference>
<evidence type="ECO:0000255" key="1">
    <source>
        <dbReference type="HAMAP-Rule" id="MF_00225"/>
    </source>
</evidence>